<feature type="chain" id="PRO_0000072475" description="Deoxynucleotidyltransferase terminal-interacting protein 1">
    <location>
        <begin position="1"/>
        <end position="327"/>
    </location>
</feature>
<feature type="DNA-binding region" description="A.T hook" evidence="5">
    <location>
        <begin position="157"/>
        <end position="171"/>
    </location>
</feature>
<feature type="DNA-binding region" description="H-T-H motif" evidence="5">
    <location>
        <begin position="214"/>
        <end position="235"/>
    </location>
</feature>
<feature type="region of interest" description="Disordered" evidence="4">
    <location>
        <begin position="1"/>
        <end position="34"/>
    </location>
</feature>
<feature type="region of interest" description="Important for dimerization" evidence="2">
    <location>
        <begin position="55"/>
        <end position="146"/>
    </location>
</feature>
<feature type="region of interest" description="Disordered" evidence="4">
    <location>
        <begin position="146"/>
        <end position="172"/>
    </location>
</feature>
<feature type="region of interest" description="Important for DNA and nucleosome binding" evidence="2">
    <location>
        <begin position="195"/>
        <end position="314"/>
    </location>
</feature>
<feature type="short sequence motif" description="Nuclear localization signal" evidence="3">
    <location>
        <begin position="162"/>
        <end position="168"/>
    </location>
</feature>
<feature type="compositionally biased region" description="Gly residues" evidence="4">
    <location>
        <begin position="1"/>
        <end position="11"/>
    </location>
</feature>
<feature type="compositionally biased region" description="Basic and acidic residues" evidence="4">
    <location>
        <begin position="146"/>
        <end position="161"/>
    </location>
</feature>
<protein>
    <recommendedName>
        <fullName>Deoxynucleotidyltransferase terminal-interacting protein 1</fullName>
    </recommendedName>
    <alternativeName>
        <fullName>Terminal deoxynucleotidyltransferase-interacting factor 1</fullName>
        <shortName>TdIF1</shortName>
        <shortName>TdT-interacting factor 1</shortName>
    </alternativeName>
</protein>
<evidence type="ECO:0000250" key="1">
    <source>
        <dbReference type="UniProtKB" id="Q99LB0"/>
    </source>
</evidence>
<evidence type="ECO:0000250" key="2">
    <source>
        <dbReference type="UniProtKB" id="Q9H147"/>
    </source>
</evidence>
<evidence type="ECO:0000255" key="3"/>
<evidence type="ECO:0000256" key="4">
    <source>
        <dbReference type="SAM" id="MobiDB-lite"/>
    </source>
</evidence>
<evidence type="ECO:0000305" key="5"/>
<comment type="function">
    <text evidence="2">Increases DNTT terminal deoxynucleotidyltransferase activity (in vitro). Also acts as a transcriptional regulator, binding to the consensus sequence 5'-GNTGCATG-3' following an AT-tract. Associates with RAB20 promoter and positively regulates its transcription. Binds DNA and nucleosomes; may recruit HDAC1 complexes to nucleosomes or naked DNA.</text>
</comment>
<comment type="subunit">
    <text evidence="1 2">Monomer and homodimer. A minor proportion may form homotrimers. Interacts with ZNF541. Interacts with the terminal deoxynucleotidyltransferase DNTT. Interacts with TRERF1. Identified in a histone deacetylase complex that contains DNTTIP1, HDAC1 and MIDEAS; this complex assembles into a tetramer that contains four copies of each protein chain. Component of a histone deacetylase complex containing DNTTIP1, ZNF541, HDAC1 and HDAC2. Identified in a complex with KCTD19, HDAC1, HDAC2 and ZNF541.</text>
</comment>
<comment type="subcellular location">
    <subcellularLocation>
        <location evidence="2">Nucleus</location>
    </subcellularLocation>
</comment>
<comment type="tissue specificity">
    <text>Expressed in thymus, bone marrow and spleen.</text>
</comment>
<comment type="domain">
    <text evidence="2">The N-terminal domain mediates dimerization.</text>
</comment>
<comment type="domain">
    <text evidence="2">The C-terminal domain mediates interaction with DNA and nucleosomes. It contains a HTH motif that mediates recognition of the consensus sequence.</text>
</comment>
<proteinExistence type="evidence at transcript level"/>
<keyword id="KW-0238">DNA-binding</keyword>
<keyword id="KW-0539">Nucleus</keyword>
<keyword id="KW-1185">Reference proteome</keyword>
<keyword id="KW-0804">Transcription</keyword>
<keyword id="KW-0805">Transcription regulation</keyword>
<dbReference type="EMBL" id="AF348701">
    <property type="protein sequence ID" value="AAK49953.1"/>
    <property type="molecule type" value="mRNA"/>
</dbReference>
<dbReference type="BMRB" id="Q91Y53"/>
<dbReference type="SMR" id="Q91Y53"/>
<dbReference type="FunCoup" id="Q91Y53">
    <property type="interactions" value="2318"/>
</dbReference>
<dbReference type="STRING" id="10116.ENSRNOP00000020280"/>
<dbReference type="PhosphoSitePlus" id="Q91Y53"/>
<dbReference type="PaxDb" id="10116-ENSRNOP00000020280"/>
<dbReference type="UCSC" id="RGD:621627">
    <property type="organism name" value="rat"/>
</dbReference>
<dbReference type="AGR" id="RGD:621627"/>
<dbReference type="RGD" id="621627">
    <property type="gene designation" value="Dnttip1"/>
</dbReference>
<dbReference type="eggNOG" id="KOG4801">
    <property type="taxonomic scope" value="Eukaryota"/>
</dbReference>
<dbReference type="InParanoid" id="Q91Y53"/>
<dbReference type="PRO" id="PR:Q91Y53"/>
<dbReference type="Proteomes" id="UP000002494">
    <property type="component" value="Unplaced"/>
</dbReference>
<dbReference type="GO" id="GO:0000118">
    <property type="term" value="C:histone deacetylase complex"/>
    <property type="evidence" value="ECO:0000250"/>
    <property type="project" value="UniProtKB"/>
</dbReference>
<dbReference type="GO" id="GO:0005634">
    <property type="term" value="C:nucleus"/>
    <property type="evidence" value="ECO:0000250"/>
    <property type="project" value="UniProtKB"/>
</dbReference>
<dbReference type="GO" id="GO:0003677">
    <property type="term" value="F:DNA binding"/>
    <property type="evidence" value="ECO:0000250"/>
    <property type="project" value="UniProtKB"/>
</dbReference>
<dbReference type="GO" id="GO:0031491">
    <property type="term" value="F:nucleosome binding"/>
    <property type="evidence" value="ECO:0000250"/>
    <property type="project" value="UniProtKB"/>
</dbReference>
<dbReference type="GO" id="GO:0042803">
    <property type="term" value="F:protein homodimerization activity"/>
    <property type="evidence" value="ECO:0000266"/>
    <property type="project" value="RGD"/>
</dbReference>
<dbReference type="InterPro" id="IPR041384">
    <property type="entry name" value="DNTTIP1_dimer"/>
</dbReference>
<dbReference type="InterPro" id="IPR026064">
    <property type="entry name" value="TdIF1"/>
</dbReference>
<dbReference type="InterPro" id="IPR049121">
    <property type="entry name" value="TdIF1_C"/>
</dbReference>
<dbReference type="PANTHER" id="PTHR23399">
    <property type="entry name" value="DEOXYNUCLEOTIDYLTRANSFERASE TERMINAL-INTERACTING PROTEIN 1"/>
    <property type="match status" value="1"/>
</dbReference>
<dbReference type="PANTHER" id="PTHR23399:SF2">
    <property type="entry name" value="DEOXYNUCLEOTIDYLTRANSFERASE TERMINAL-INTERACTING PROTEIN 1"/>
    <property type="match status" value="1"/>
</dbReference>
<dbReference type="Pfam" id="PF18192">
    <property type="entry name" value="DNTTIP1_dimer"/>
    <property type="match status" value="1"/>
</dbReference>
<dbReference type="Pfam" id="PF21229">
    <property type="entry name" value="TdIF1_2nd"/>
    <property type="match status" value="1"/>
</dbReference>
<reference key="1">
    <citation type="submission" date="2001-02" db="EMBL/GenBank/DDBJ databases">
        <title>Rat novel gene identified from uterus, highly expressed in rat prostate and CNS tissue.</title>
        <authorList>
            <person name="Long X."/>
            <person name="Bigsby R.M."/>
            <person name="Nephew K.P."/>
        </authorList>
    </citation>
    <scope>NUCLEOTIDE SEQUENCE [MRNA]</scope>
    <source>
        <tissue>Uterus</tissue>
    </source>
</reference>
<accession>Q91Y53</accession>
<gene>
    <name type="primary">Dnttip1</name>
    <name type="synonym">Tdif1</name>
</gene>
<organism>
    <name type="scientific">Rattus norvegicus</name>
    <name type="common">Rat</name>
    <dbReference type="NCBI Taxonomy" id="10116"/>
    <lineage>
        <taxon>Eukaryota</taxon>
        <taxon>Metazoa</taxon>
        <taxon>Chordata</taxon>
        <taxon>Craniata</taxon>
        <taxon>Vertebrata</taxon>
        <taxon>Euteleostomi</taxon>
        <taxon>Mammalia</taxon>
        <taxon>Eutheria</taxon>
        <taxon>Euarchontoglires</taxon>
        <taxon>Glires</taxon>
        <taxon>Rodentia</taxon>
        <taxon>Myomorpha</taxon>
        <taxon>Muroidea</taxon>
        <taxon>Muridae</taxon>
        <taxon>Murinae</taxon>
        <taxon>Rattus</taxon>
    </lineage>
</organism>
<sequence>MGATGDTGGPRPGTESRRPGNVGNAGAAGQPVLTNPWNIMIKPRQVQRRGRRSQMTTSFTDPAISMDLLRAVLQPSINEEIQSVFNKYMKFFQKAALNVRDNVGEEVDAEQLIQEACRSCVEQAKLLFSDGEKVIPRLAHELPGIKRGRQAEEESHREAPFPKRGKVGLPGHVLSNDRAAAGMVWKPKSCEPIRREGPKWDPARLNESTTFVLGSRANKALGMGGTRGRIYIKHPHLFKYAADPQDKHWLAEQHHMRATGGKMAYLLIEEDIRDLAASDDYRGCLDLKLEELKSFVLPSWMVEKMRKYMETLRTENEHRAAEATPQT</sequence>
<name>TDIF1_RAT</name>